<organism>
    <name type="scientific">Dictyostelium discoideum</name>
    <name type="common">Social amoeba</name>
    <dbReference type="NCBI Taxonomy" id="44689"/>
    <lineage>
        <taxon>Eukaryota</taxon>
        <taxon>Amoebozoa</taxon>
        <taxon>Evosea</taxon>
        <taxon>Eumycetozoa</taxon>
        <taxon>Dictyostelia</taxon>
        <taxon>Dictyosteliales</taxon>
        <taxon>Dictyosteliaceae</taxon>
        <taxon>Dictyostelium</taxon>
    </lineage>
</organism>
<accession>Q55FT8</accession>
<protein>
    <recommendedName>
        <fullName>Bromo and FHA domain-containing protein DDB_G0267958</fullName>
    </recommendedName>
</protein>
<gene>
    <name type="ORF">DDB_G0267958</name>
</gene>
<reference key="1">
    <citation type="journal article" date="2005" name="Nature">
        <title>The genome of the social amoeba Dictyostelium discoideum.</title>
        <authorList>
            <person name="Eichinger L."/>
            <person name="Pachebat J.A."/>
            <person name="Gloeckner G."/>
            <person name="Rajandream M.A."/>
            <person name="Sucgang R."/>
            <person name="Berriman M."/>
            <person name="Song J."/>
            <person name="Olsen R."/>
            <person name="Szafranski K."/>
            <person name="Xu Q."/>
            <person name="Tunggal B."/>
            <person name="Kummerfeld S."/>
            <person name="Madera M."/>
            <person name="Konfortov B.A."/>
            <person name="Rivero F."/>
            <person name="Bankier A.T."/>
            <person name="Lehmann R."/>
            <person name="Hamlin N."/>
            <person name="Davies R."/>
            <person name="Gaudet P."/>
            <person name="Fey P."/>
            <person name="Pilcher K."/>
            <person name="Chen G."/>
            <person name="Saunders D."/>
            <person name="Sodergren E.J."/>
            <person name="Davis P."/>
            <person name="Kerhornou A."/>
            <person name="Nie X."/>
            <person name="Hall N."/>
            <person name="Anjard C."/>
            <person name="Hemphill L."/>
            <person name="Bason N."/>
            <person name="Farbrother P."/>
            <person name="Desany B."/>
            <person name="Just E."/>
            <person name="Morio T."/>
            <person name="Rost R."/>
            <person name="Churcher C.M."/>
            <person name="Cooper J."/>
            <person name="Haydock S."/>
            <person name="van Driessche N."/>
            <person name="Cronin A."/>
            <person name="Goodhead I."/>
            <person name="Muzny D.M."/>
            <person name="Mourier T."/>
            <person name="Pain A."/>
            <person name="Lu M."/>
            <person name="Harper D."/>
            <person name="Lindsay R."/>
            <person name="Hauser H."/>
            <person name="James K.D."/>
            <person name="Quiles M."/>
            <person name="Madan Babu M."/>
            <person name="Saito T."/>
            <person name="Buchrieser C."/>
            <person name="Wardroper A."/>
            <person name="Felder M."/>
            <person name="Thangavelu M."/>
            <person name="Johnson D."/>
            <person name="Knights A."/>
            <person name="Loulseged H."/>
            <person name="Mungall K.L."/>
            <person name="Oliver K."/>
            <person name="Price C."/>
            <person name="Quail M.A."/>
            <person name="Urushihara H."/>
            <person name="Hernandez J."/>
            <person name="Rabbinowitsch E."/>
            <person name="Steffen D."/>
            <person name="Sanders M."/>
            <person name="Ma J."/>
            <person name="Kohara Y."/>
            <person name="Sharp S."/>
            <person name="Simmonds M.N."/>
            <person name="Spiegler S."/>
            <person name="Tivey A."/>
            <person name="Sugano S."/>
            <person name="White B."/>
            <person name="Walker D."/>
            <person name="Woodward J.R."/>
            <person name="Winckler T."/>
            <person name="Tanaka Y."/>
            <person name="Shaulsky G."/>
            <person name="Schleicher M."/>
            <person name="Weinstock G.M."/>
            <person name="Rosenthal A."/>
            <person name="Cox E.C."/>
            <person name="Chisholm R.L."/>
            <person name="Gibbs R.A."/>
            <person name="Loomis W.F."/>
            <person name="Platzer M."/>
            <person name="Kay R.R."/>
            <person name="Williams J.G."/>
            <person name="Dear P.H."/>
            <person name="Noegel A.A."/>
            <person name="Barrell B.G."/>
            <person name="Kuspa A."/>
        </authorList>
    </citation>
    <scope>NUCLEOTIDE SEQUENCE [LARGE SCALE GENOMIC DNA]</scope>
    <source>
        <strain>AX4</strain>
    </source>
</reference>
<sequence>MADSVTIGQLEKLSVQCDKENQHVENKENNINSDNINLLEATKTTLPIPNTSNTNPPMNQSSSPTTTTTTPTTTTTPTTAEPAKKRKIFAKLHLLNRDGSVKNYFEMKKTKLIIGSDTELADIQVVRPGIYPKHVEIIYDKEKKKFYLNPLIDPKDSDNVRLNFVPFLHKKEVLGNGDIISIGFRSIKMEFIEKVTVDQLVQPEKQYIPSNTPTCITNTPIQTPPTTSPPSSTTTNKKDNTSTNVTKKPIATVPSTTTSTKKSSVVPESKPATKTITKETPKPTKTTTTTTVTTSKPTVKPTAVKKSINDDDYGDDYNEEEDDDDEEEEEEEEEEEEEEEVESKQIKVVNSKPNDDDMSCKKPMKYTNTNEEMRKSLASNVGGINSKIISKGDSVRNLLPISSRRPTAPVTPTKPTSTKKVTTPKKATVVKPPKESKVPKVPKVPKVPKAAVVASIDENGKEDYIRLISFKKAKDIVKAFQSHEKLVKSKNNGHGNISNEKKEILKCFEVLDQINWRLSTDKPGDSRPISSYFKNIPSLSEFDSELLTDYYSMISEPMSINSILSSVIYTADYNIDNCLDDFNQVLENSMTYNSENSIIYWLAHYCKIELYKALSNSGIIQNKLYLDIKKDSETFLKSIGTQLKGDGISLPQIIAQSVSKNKEQTVPQEEDEEEEEEEEEEEEEEEEGEEGKEDEEEEEKEEEEGEENEEEEDVEIDDCEIDQESDDDQ</sequence>
<dbReference type="EMBL" id="AAFI02000003">
    <property type="protein sequence ID" value="EAL73432.1"/>
    <property type="molecule type" value="Genomic_DNA"/>
</dbReference>
<dbReference type="RefSeq" id="XP_647445.1">
    <property type="nucleotide sequence ID" value="XM_642353.1"/>
</dbReference>
<dbReference type="SMR" id="Q55FT8"/>
<dbReference type="FunCoup" id="Q55FT8">
    <property type="interactions" value="108"/>
</dbReference>
<dbReference type="STRING" id="44689.Q55FT8"/>
<dbReference type="PaxDb" id="44689-DDB0220692"/>
<dbReference type="EnsemblProtists" id="EAL73432">
    <property type="protein sequence ID" value="EAL73432"/>
    <property type="gene ID" value="DDB_G0267958"/>
</dbReference>
<dbReference type="GeneID" id="8616252"/>
<dbReference type="KEGG" id="ddi:DDB_G0267958"/>
<dbReference type="dictyBase" id="DDB_G0267958"/>
<dbReference type="VEuPathDB" id="AmoebaDB:DDB_G0267958"/>
<dbReference type="eggNOG" id="ENOG502RC8T">
    <property type="taxonomic scope" value="Eukaryota"/>
</dbReference>
<dbReference type="HOGENOM" id="CLU_380118_0_0_1"/>
<dbReference type="InParanoid" id="Q55FT8"/>
<dbReference type="OMA" id="NDEPHNE"/>
<dbReference type="PRO" id="PR:Q55FT8"/>
<dbReference type="Proteomes" id="UP000002195">
    <property type="component" value="Chromosome 1"/>
</dbReference>
<dbReference type="CDD" id="cd04369">
    <property type="entry name" value="Bromodomain"/>
    <property type="match status" value="1"/>
</dbReference>
<dbReference type="Gene3D" id="2.60.200.20">
    <property type="match status" value="1"/>
</dbReference>
<dbReference type="Gene3D" id="1.20.920.10">
    <property type="entry name" value="Bromodomain-like"/>
    <property type="match status" value="1"/>
</dbReference>
<dbReference type="InterPro" id="IPR001487">
    <property type="entry name" value="Bromodomain"/>
</dbReference>
<dbReference type="InterPro" id="IPR036427">
    <property type="entry name" value="Bromodomain-like_sf"/>
</dbReference>
<dbReference type="InterPro" id="IPR008984">
    <property type="entry name" value="SMAD_FHA_dom_sf"/>
</dbReference>
<dbReference type="PANTHER" id="PTHR43670">
    <property type="entry name" value="HEAT SHOCK PROTEIN 26"/>
    <property type="match status" value="1"/>
</dbReference>
<dbReference type="PANTHER" id="PTHR43670:SF131">
    <property type="entry name" value="LRRGT00202"/>
    <property type="match status" value="1"/>
</dbReference>
<dbReference type="Pfam" id="PF00439">
    <property type="entry name" value="Bromodomain"/>
    <property type="match status" value="1"/>
</dbReference>
<dbReference type="PRINTS" id="PR00503">
    <property type="entry name" value="BROMODOMAIN"/>
</dbReference>
<dbReference type="SMART" id="SM00297">
    <property type="entry name" value="BROMO"/>
    <property type="match status" value="1"/>
</dbReference>
<dbReference type="SUPFAM" id="SSF47370">
    <property type="entry name" value="Bromodomain"/>
    <property type="match status" value="1"/>
</dbReference>
<dbReference type="SUPFAM" id="SSF49879">
    <property type="entry name" value="SMAD/FHA domain"/>
    <property type="match status" value="1"/>
</dbReference>
<dbReference type="PROSITE" id="PS50014">
    <property type="entry name" value="BROMODOMAIN_2"/>
    <property type="match status" value="1"/>
</dbReference>
<proteinExistence type="predicted"/>
<feature type="chain" id="PRO_0000388242" description="Bromo and FHA domain-containing protein DDB_G0267958">
    <location>
        <begin position="1"/>
        <end position="729"/>
    </location>
</feature>
<feature type="domain" description="FHA">
    <location>
        <begin position="112"/>
        <end position="167"/>
    </location>
</feature>
<feature type="domain" description="Bromo" evidence="2">
    <location>
        <begin position="498"/>
        <end position="617"/>
    </location>
</feature>
<feature type="region of interest" description="Disordered" evidence="3">
    <location>
        <begin position="46"/>
        <end position="83"/>
    </location>
</feature>
<feature type="region of interest" description="Disordered" evidence="3">
    <location>
        <begin position="208"/>
        <end position="361"/>
    </location>
</feature>
<feature type="region of interest" description="Disordered" evidence="3">
    <location>
        <begin position="403"/>
        <end position="442"/>
    </location>
</feature>
<feature type="region of interest" description="Disordered" evidence="3">
    <location>
        <begin position="659"/>
        <end position="729"/>
    </location>
</feature>
<feature type="coiled-coil region" evidence="1">
    <location>
        <begin position="315"/>
        <end position="352"/>
    </location>
</feature>
<feature type="coiled-coil region" evidence="1">
    <location>
        <begin position="659"/>
        <end position="718"/>
    </location>
</feature>
<feature type="compositionally biased region" description="Low complexity" evidence="3">
    <location>
        <begin position="46"/>
        <end position="79"/>
    </location>
</feature>
<feature type="compositionally biased region" description="Low complexity" evidence="3">
    <location>
        <begin position="208"/>
        <end position="221"/>
    </location>
</feature>
<feature type="compositionally biased region" description="Low complexity" evidence="3">
    <location>
        <begin position="229"/>
        <end position="275"/>
    </location>
</feature>
<feature type="compositionally biased region" description="Low complexity" evidence="3">
    <location>
        <begin position="283"/>
        <end position="306"/>
    </location>
</feature>
<feature type="compositionally biased region" description="Acidic residues" evidence="3">
    <location>
        <begin position="310"/>
        <end position="341"/>
    </location>
</feature>
<feature type="compositionally biased region" description="Low complexity" evidence="3">
    <location>
        <begin position="406"/>
        <end position="431"/>
    </location>
</feature>
<feature type="compositionally biased region" description="Acidic residues" evidence="3">
    <location>
        <begin position="668"/>
        <end position="729"/>
    </location>
</feature>
<evidence type="ECO:0000255" key="1"/>
<evidence type="ECO:0000255" key="2">
    <source>
        <dbReference type="PROSITE-ProRule" id="PRU00035"/>
    </source>
</evidence>
<evidence type="ECO:0000256" key="3">
    <source>
        <dbReference type="SAM" id="MobiDB-lite"/>
    </source>
</evidence>
<name>Y7958_DICDI</name>
<keyword id="KW-0103">Bromodomain</keyword>
<keyword id="KW-0175">Coiled coil</keyword>
<keyword id="KW-1185">Reference proteome</keyword>